<organism>
    <name type="scientific">Sorangium cellulosum (strain So ce56)</name>
    <name type="common">Polyangium cellulosum (strain So ce56)</name>
    <dbReference type="NCBI Taxonomy" id="448385"/>
    <lineage>
        <taxon>Bacteria</taxon>
        <taxon>Pseudomonadati</taxon>
        <taxon>Myxococcota</taxon>
        <taxon>Polyangia</taxon>
        <taxon>Polyangiales</taxon>
        <taxon>Polyangiaceae</taxon>
        <taxon>Sorangium</taxon>
    </lineage>
</organism>
<gene>
    <name evidence="1" type="primary">ftsH2</name>
    <name type="ordered locus">sce1641</name>
</gene>
<comment type="function">
    <text evidence="1">Acts as a processive, ATP-dependent zinc metallopeptidase for both cytoplasmic and membrane proteins. Plays a role in the quality control of integral membrane proteins.</text>
</comment>
<comment type="cofactor">
    <cofactor evidence="1">
        <name>Zn(2+)</name>
        <dbReference type="ChEBI" id="CHEBI:29105"/>
    </cofactor>
    <text evidence="1">Binds 1 zinc ion per subunit.</text>
</comment>
<comment type="subunit">
    <text evidence="1">Homohexamer.</text>
</comment>
<comment type="subcellular location">
    <subcellularLocation>
        <location evidence="1">Cell inner membrane</location>
        <topology evidence="1">Multi-pass membrane protein</topology>
        <orientation evidence="1">Cytoplasmic side</orientation>
    </subcellularLocation>
</comment>
<comment type="similarity">
    <text evidence="1">In the central section; belongs to the AAA ATPase family.</text>
</comment>
<comment type="similarity">
    <text evidence="1">In the C-terminal section; belongs to the peptidase M41 family.</text>
</comment>
<name>FTSH2_SORC5</name>
<feature type="chain" id="PRO_0000400392" description="ATP-dependent zinc metalloprotease FtsH 2">
    <location>
        <begin position="1"/>
        <end position="607"/>
    </location>
</feature>
<feature type="topological domain" description="Cytoplasmic" evidence="1">
    <location>
        <begin position="1"/>
        <end position="2"/>
    </location>
</feature>
<feature type="transmembrane region" description="Helical" evidence="1">
    <location>
        <begin position="3"/>
        <end position="23"/>
    </location>
</feature>
<feature type="topological domain" description="Periplasmic" evidence="1">
    <location>
        <begin position="24"/>
        <end position="99"/>
    </location>
</feature>
<feature type="transmembrane region" description="Helical" evidence="1">
    <location>
        <begin position="100"/>
        <end position="120"/>
    </location>
</feature>
<feature type="topological domain" description="Cytoplasmic" evidence="1">
    <location>
        <begin position="121"/>
        <end position="607"/>
    </location>
</feature>
<feature type="active site" evidence="1">
    <location>
        <position position="419"/>
    </location>
</feature>
<feature type="binding site" evidence="1">
    <location>
        <begin position="195"/>
        <end position="202"/>
    </location>
    <ligand>
        <name>ATP</name>
        <dbReference type="ChEBI" id="CHEBI:30616"/>
    </ligand>
</feature>
<feature type="binding site" evidence="1">
    <location>
        <position position="418"/>
    </location>
    <ligand>
        <name>Zn(2+)</name>
        <dbReference type="ChEBI" id="CHEBI:29105"/>
        <note>catalytic</note>
    </ligand>
</feature>
<feature type="binding site" evidence="1">
    <location>
        <position position="422"/>
    </location>
    <ligand>
        <name>Zn(2+)</name>
        <dbReference type="ChEBI" id="CHEBI:29105"/>
        <note>catalytic</note>
    </ligand>
</feature>
<feature type="binding site" evidence="1">
    <location>
        <position position="495"/>
    </location>
    <ligand>
        <name>Zn(2+)</name>
        <dbReference type="ChEBI" id="CHEBI:29105"/>
        <note>catalytic</note>
    </ligand>
</feature>
<dbReference type="EC" id="3.4.24.-" evidence="1"/>
<dbReference type="EMBL" id="AM746676">
    <property type="protein sequence ID" value="CAN91799.1"/>
    <property type="molecule type" value="Genomic_DNA"/>
</dbReference>
<dbReference type="RefSeq" id="WP_012234276.1">
    <property type="nucleotide sequence ID" value="NC_010162.1"/>
</dbReference>
<dbReference type="SMR" id="A9FDV9"/>
<dbReference type="STRING" id="448385.sce1641"/>
<dbReference type="KEGG" id="scl:sce1641"/>
<dbReference type="eggNOG" id="COG0465">
    <property type="taxonomic scope" value="Bacteria"/>
</dbReference>
<dbReference type="HOGENOM" id="CLU_000688_16_2_7"/>
<dbReference type="OrthoDB" id="9809379at2"/>
<dbReference type="BioCyc" id="SCEL448385:SCE_RS08455-MONOMER"/>
<dbReference type="Proteomes" id="UP000002139">
    <property type="component" value="Chromosome"/>
</dbReference>
<dbReference type="GO" id="GO:0005886">
    <property type="term" value="C:plasma membrane"/>
    <property type="evidence" value="ECO:0007669"/>
    <property type="project" value="UniProtKB-SubCell"/>
</dbReference>
<dbReference type="GO" id="GO:0005524">
    <property type="term" value="F:ATP binding"/>
    <property type="evidence" value="ECO:0007669"/>
    <property type="project" value="UniProtKB-UniRule"/>
</dbReference>
<dbReference type="GO" id="GO:0016887">
    <property type="term" value="F:ATP hydrolysis activity"/>
    <property type="evidence" value="ECO:0007669"/>
    <property type="project" value="UniProtKB-UniRule"/>
</dbReference>
<dbReference type="GO" id="GO:0004176">
    <property type="term" value="F:ATP-dependent peptidase activity"/>
    <property type="evidence" value="ECO:0007669"/>
    <property type="project" value="InterPro"/>
</dbReference>
<dbReference type="GO" id="GO:0004222">
    <property type="term" value="F:metalloendopeptidase activity"/>
    <property type="evidence" value="ECO:0007669"/>
    <property type="project" value="InterPro"/>
</dbReference>
<dbReference type="GO" id="GO:0008270">
    <property type="term" value="F:zinc ion binding"/>
    <property type="evidence" value="ECO:0007669"/>
    <property type="project" value="UniProtKB-UniRule"/>
</dbReference>
<dbReference type="GO" id="GO:0030163">
    <property type="term" value="P:protein catabolic process"/>
    <property type="evidence" value="ECO:0007669"/>
    <property type="project" value="UniProtKB-UniRule"/>
</dbReference>
<dbReference type="GO" id="GO:0006508">
    <property type="term" value="P:proteolysis"/>
    <property type="evidence" value="ECO:0007669"/>
    <property type="project" value="UniProtKB-KW"/>
</dbReference>
<dbReference type="CDD" id="cd19501">
    <property type="entry name" value="RecA-like_FtsH"/>
    <property type="match status" value="1"/>
</dbReference>
<dbReference type="FunFam" id="1.10.8.60:FF:000001">
    <property type="entry name" value="ATP-dependent zinc metalloprotease FtsH"/>
    <property type="match status" value="1"/>
</dbReference>
<dbReference type="FunFam" id="1.20.58.760:FF:000001">
    <property type="entry name" value="ATP-dependent zinc metalloprotease FtsH"/>
    <property type="match status" value="1"/>
</dbReference>
<dbReference type="FunFam" id="3.40.50.300:FF:000001">
    <property type="entry name" value="ATP-dependent zinc metalloprotease FtsH"/>
    <property type="match status" value="1"/>
</dbReference>
<dbReference type="Gene3D" id="1.10.8.60">
    <property type="match status" value="1"/>
</dbReference>
<dbReference type="Gene3D" id="3.40.50.300">
    <property type="entry name" value="P-loop containing nucleotide triphosphate hydrolases"/>
    <property type="match status" value="1"/>
</dbReference>
<dbReference type="Gene3D" id="1.20.58.760">
    <property type="entry name" value="Peptidase M41"/>
    <property type="match status" value="1"/>
</dbReference>
<dbReference type="HAMAP" id="MF_01458">
    <property type="entry name" value="FtsH"/>
    <property type="match status" value="1"/>
</dbReference>
<dbReference type="InterPro" id="IPR003593">
    <property type="entry name" value="AAA+_ATPase"/>
</dbReference>
<dbReference type="InterPro" id="IPR041569">
    <property type="entry name" value="AAA_lid_3"/>
</dbReference>
<dbReference type="InterPro" id="IPR003959">
    <property type="entry name" value="ATPase_AAA_core"/>
</dbReference>
<dbReference type="InterPro" id="IPR003960">
    <property type="entry name" value="ATPase_AAA_CS"/>
</dbReference>
<dbReference type="InterPro" id="IPR005936">
    <property type="entry name" value="FtsH"/>
</dbReference>
<dbReference type="InterPro" id="IPR027417">
    <property type="entry name" value="P-loop_NTPase"/>
</dbReference>
<dbReference type="InterPro" id="IPR011546">
    <property type="entry name" value="Pept_M41_FtsH_extracell"/>
</dbReference>
<dbReference type="InterPro" id="IPR000642">
    <property type="entry name" value="Peptidase_M41"/>
</dbReference>
<dbReference type="InterPro" id="IPR037219">
    <property type="entry name" value="Peptidase_M41-like"/>
</dbReference>
<dbReference type="NCBIfam" id="TIGR01241">
    <property type="entry name" value="FtsH_fam"/>
    <property type="match status" value="1"/>
</dbReference>
<dbReference type="PANTHER" id="PTHR23076:SF97">
    <property type="entry name" value="ATP-DEPENDENT ZINC METALLOPROTEASE YME1L1"/>
    <property type="match status" value="1"/>
</dbReference>
<dbReference type="PANTHER" id="PTHR23076">
    <property type="entry name" value="METALLOPROTEASE M41 FTSH"/>
    <property type="match status" value="1"/>
</dbReference>
<dbReference type="Pfam" id="PF00004">
    <property type="entry name" value="AAA"/>
    <property type="match status" value="1"/>
</dbReference>
<dbReference type="Pfam" id="PF17862">
    <property type="entry name" value="AAA_lid_3"/>
    <property type="match status" value="1"/>
</dbReference>
<dbReference type="Pfam" id="PF06480">
    <property type="entry name" value="FtsH_ext"/>
    <property type="match status" value="1"/>
</dbReference>
<dbReference type="Pfam" id="PF01434">
    <property type="entry name" value="Peptidase_M41"/>
    <property type="match status" value="1"/>
</dbReference>
<dbReference type="SMART" id="SM00382">
    <property type="entry name" value="AAA"/>
    <property type="match status" value="1"/>
</dbReference>
<dbReference type="SUPFAM" id="SSF140990">
    <property type="entry name" value="FtsH protease domain-like"/>
    <property type="match status" value="1"/>
</dbReference>
<dbReference type="SUPFAM" id="SSF52540">
    <property type="entry name" value="P-loop containing nucleoside triphosphate hydrolases"/>
    <property type="match status" value="1"/>
</dbReference>
<dbReference type="PROSITE" id="PS00674">
    <property type="entry name" value="AAA"/>
    <property type="match status" value="1"/>
</dbReference>
<keyword id="KW-0067">ATP-binding</keyword>
<keyword id="KW-0997">Cell inner membrane</keyword>
<keyword id="KW-1003">Cell membrane</keyword>
<keyword id="KW-0378">Hydrolase</keyword>
<keyword id="KW-0472">Membrane</keyword>
<keyword id="KW-0479">Metal-binding</keyword>
<keyword id="KW-0482">Metalloprotease</keyword>
<keyword id="KW-0547">Nucleotide-binding</keyword>
<keyword id="KW-0645">Protease</keyword>
<keyword id="KW-1185">Reference proteome</keyword>
<keyword id="KW-0812">Transmembrane</keyword>
<keyword id="KW-1133">Transmembrane helix</keyword>
<keyword id="KW-0862">Zinc</keyword>
<proteinExistence type="inferred from homology"/>
<reference key="1">
    <citation type="journal article" date="2007" name="Nat. Biotechnol.">
        <title>Complete genome sequence of the myxobacterium Sorangium cellulosum.</title>
        <authorList>
            <person name="Schneiker S."/>
            <person name="Perlova O."/>
            <person name="Kaiser O."/>
            <person name="Gerth K."/>
            <person name="Alici A."/>
            <person name="Altmeyer M.O."/>
            <person name="Bartels D."/>
            <person name="Bekel T."/>
            <person name="Beyer S."/>
            <person name="Bode E."/>
            <person name="Bode H.B."/>
            <person name="Bolten C.J."/>
            <person name="Choudhuri J.V."/>
            <person name="Doss S."/>
            <person name="Elnakady Y.A."/>
            <person name="Frank B."/>
            <person name="Gaigalat L."/>
            <person name="Goesmann A."/>
            <person name="Groeger C."/>
            <person name="Gross F."/>
            <person name="Jelsbak L."/>
            <person name="Jelsbak L."/>
            <person name="Kalinowski J."/>
            <person name="Kegler C."/>
            <person name="Knauber T."/>
            <person name="Konietzny S."/>
            <person name="Kopp M."/>
            <person name="Krause L."/>
            <person name="Krug D."/>
            <person name="Linke B."/>
            <person name="Mahmud T."/>
            <person name="Martinez-Arias R."/>
            <person name="McHardy A.C."/>
            <person name="Merai M."/>
            <person name="Meyer F."/>
            <person name="Mormann S."/>
            <person name="Munoz-Dorado J."/>
            <person name="Perez J."/>
            <person name="Pradella S."/>
            <person name="Rachid S."/>
            <person name="Raddatz G."/>
            <person name="Rosenau F."/>
            <person name="Rueckert C."/>
            <person name="Sasse F."/>
            <person name="Scharfe M."/>
            <person name="Schuster S.C."/>
            <person name="Suen G."/>
            <person name="Treuner-Lange A."/>
            <person name="Velicer G.J."/>
            <person name="Vorholter F.-J."/>
            <person name="Weissman K.J."/>
            <person name="Welch R.D."/>
            <person name="Wenzel S.C."/>
            <person name="Whitworth D.E."/>
            <person name="Wilhelm S."/>
            <person name="Wittmann C."/>
            <person name="Bloecker H."/>
            <person name="Puehler A."/>
            <person name="Mueller R."/>
        </authorList>
    </citation>
    <scope>NUCLEOTIDE SEQUENCE [LARGE SCALE GENOMIC DNA]</scope>
    <source>
        <strain>So ce56</strain>
    </source>
</reference>
<accession>A9FDV9</accession>
<protein>
    <recommendedName>
        <fullName evidence="1">ATP-dependent zinc metalloprotease FtsH 2</fullName>
        <ecNumber evidence="1">3.4.24.-</ecNumber>
    </recommendedName>
</protein>
<evidence type="ECO:0000255" key="1">
    <source>
        <dbReference type="HAMAP-Rule" id="MF_01458"/>
    </source>
</evidence>
<sequence length="607" mass="65104">MRSLWIVLVLVLGSALLLQVMAASDDRIPYARFRSLAERGELAEIEIRDDMYIGRAVSGLSARAPQSYRTGRIEQTEKDLLADLDRRGIPYTRVADELGLPPYLWLLLPLAGLAAMGHLASRRATTAGTISGAATAFGKHKARLYEERGAIATFRDVAGNAEAKTELSEIVDFLKAPERYEKLGGRMPRGVLLVGPPGTGKTLLARAIAGEASVPFFSASGSEFVEMFVGVGAARVRDLFSQAREKGACLVFIDELDAVGKVRGLGGSVGGHDEREQTLNQLLTEMDGFDAHTAMVVIGATNRAEILDPALLRPGRFDRRVHIDRPDLAERKEILAVHARKVALDPGADLDAVAAQTAGLVGADLANIVNEAALLAARRGAEAVGHGDLEAAIERGLAGLERRGRRLGAREKLVVAYHEVGHALTASLLPTQDPVRKVSIVPRGPGALGYTIQQPREDRYLWSRQEILDRLVVLLGGRVAEEEAVGDLSTGAQDDLLNATELARRMVRELGMGQGLGLSALEPRRPLSFLGEAQGAMPSGAGPRECSDATARAIDAEVARILADAEARARALIQGHRPTLERVAARLYEVETLSGDELREMVASGEA</sequence>